<accession>Q9EV66</accession>
<proteinExistence type="inferred from homology"/>
<organism>
    <name type="scientific">Rhizobium meliloti (strain 1021)</name>
    <name type="common">Ensifer meliloti</name>
    <name type="synonym">Sinorhizobium meliloti</name>
    <dbReference type="NCBI Taxonomy" id="266834"/>
    <lineage>
        <taxon>Bacteria</taxon>
        <taxon>Pseudomonadati</taxon>
        <taxon>Pseudomonadota</taxon>
        <taxon>Alphaproteobacteria</taxon>
        <taxon>Hyphomicrobiales</taxon>
        <taxon>Rhizobiaceae</taxon>
        <taxon>Sinorhizobium/Ensifer group</taxon>
        <taxon>Sinorhizobium</taxon>
    </lineage>
</organism>
<geneLocation type="plasmid">
    <name>pSymA</name>
    <name>megaplasmid 1</name>
</geneLocation>
<keyword id="KW-0997">Cell inner membrane</keyword>
<keyword id="KW-1003">Cell membrane</keyword>
<keyword id="KW-0472">Membrane</keyword>
<keyword id="KW-0520">NAD</keyword>
<keyword id="KW-0614">Plasmid</keyword>
<keyword id="KW-0874">Quinone</keyword>
<keyword id="KW-1185">Reference proteome</keyword>
<keyword id="KW-1278">Translocase</keyword>
<keyword id="KW-0812">Transmembrane</keyword>
<keyword id="KW-1133">Transmembrane helix</keyword>
<keyword id="KW-0830">Ubiquinone</keyword>
<name>NUOH2_RHIME</name>
<comment type="function">
    <text evidence="1">NDH-1 shuttles electrons from NADH, via FMN and iron-sulfur (Fe-S) centers, to quinones in the respiratory chain. The immediate electron acceptor for the enzyme in this species is believed to be ubiquinone. Couples the redox reaction to proton translocation (for every two electrons transferred, four hydrogen ions are translocated across the cytoplasmic membrane), and thus conserves the redox energy in a proton gradient. This subunit may bind ubiquinone.</text>
</comment>
<comment type="catalytic activity">
    <reaction evidence="1">
        <text>a quinone + NADH + 5 H(+)(in) = a quinol + NAD(+) + 4 H(+)(out)</text>
        <dbReference type="Rhea" id="RHEA:57888"/>
        <dbReference type="ChEBI" id="CHEBI:15378"/>
        <dbReference type="ChEBI" id="CHEBI:24646"/>
        <dbReference type="ChEBI" id="CHEBI:57540"/>
        <dbReference type="ChEBI" id="CHEBI:57945"/>
        <dbReference type="ChEBI" id="CHEBI:132124"/>
    </reaction>
</comment>
<comment type="subunit">
    <text evidence="1">NDH-1 is composed of 14 different subunits. Subunits NuoA, H, J, K, L, M, N constitute the membrane sector of the complex.</text>
</comment>
<comment type="subcellular location">
    <subcellularLocation>
        <location evidence="1">Cell inner membrane</location>
        <topology evidence="1">Multi-pass membrane protein</topology>
    </subcellularLocation>
</comment>
<comment type="similarity">
    <text evidence="1">Belongs to the complex I subunit 1 family.</text>
</comment>
<reference key="1">
    <citation type="submission" date="2000-10" db="EMBL/GenBank/DDBJ databases">
        <title>Sinorhizobium meliloti carries two sets of nuo genes.</title>
        <authorList>
            <person name="Putnoky P."/>
            <person name="Jady B."/>
            <person name="Chellapilla K.P."/>
            <person name="Barta F."/>
            <person name="Kiss E."/>
        </authorList>
    </citation>
    <scope>NUCLEOTIDE SEQUENCE [GENOMIC DNA]</scope>
    <source>
        <strain>41</strain>
    </source>
</reference>
<reference key="2">
    <citation type="journal article" date="2001" name="Proc. Natl. Acad. Sci. U.S.A.">
        <title>Nucleotide sequence and predicted functions of the entire Sinorhizobium meliloti pSymA megaplasmid.</title>
        <authorList>
            <person name="Barnett M.J."/>
            <person name="Fisher R.F."/>
            <person name="Jones T."/>
            <person name="Komp C."/>
            <person name="Abola A.P."/>
            <person name="Barloy-Hubler F."/>
            <person name="Bowser L."/>
            <person name="Capela D."/>
            <person name="Galibert F."/>
            <person name="Gouzy J."/>
            <person name="Gurjal M."/>
            <person name="Hong A."/>
            <person name="Huizar L."/>
            <person name="Hyman R.W."/>
            <person name="Kahn D."/>
            <person name="Kahn M.L."/>
            <person name="Kalman S."/>
            <person name="Keating D.H."/>
            <person name="Palm C."/>
            <person name="Peck M.C."/>
            <person name="Surzycki R."/>
            <person name="Wells D.H."/>
            <person name="Yeh K.-C."/>
            <person name="Davis R.W."/>
            <person name="Federspiel N.A."/>
            <person name="Long S.R."/>
        </authorList>
    </citation>
    <scope>NUCLEOTIDE SEQUENCE [LARGE SCALE GENOMIC DNA]</scope>
    <source>
        <strain>1021</strain>
        <plasmid>pSymA (megaplasmid 1)</plasmid>
    </source>
</reference>
<reference key="3">
    <citation type="journal article" date="2001" name="Science">
        <title>The composite genome of the legume symbiont Sinorhizobium meliloti.</title>
        <authorList>
            <person name="Galibert F."/>
            <person name="Finan T.M."/>
            <person name="Long S.R."/>
            <person name="Puehler A."/>
            <person name="Abola P."/>
            <person name="Ampe F."/>
            <person name="Barloy-Hubler F."/>
            <person name="Barnett M.J."/>
            <person name="Becker A."/>
            <person name="Boistard P."/>
            <person name="Bothe G."/>
            <person name="Boutry M."/>
            <person name="Bowser L."/>
            <person name="Buhrmester J."/>
            <person name="Cadieu E."/>
            <person name="Capela D."/>
            <person name="Chain P."/>
            <person name="Cowie A."/>
            <person name="Davis R.W."/>
            <person name="Dreano S."/>
            <person name="Federspiel N.A."/>
            <person name="Fisher R.F."/>
            <person name="Gloux S."/>
            <person name="Godrie T."/>
            <person name="Goffeau A."/>
            <person name="Golding B."/>
            <person name="Gouzy J."/>
            <person name="Gurjal M."/>
            <person name="Hernandez-Lucas I."/>
            <person name="Hong A."/>
            <person name="Huizar L."/>
            <person name="Hyman R.W."/>
            <person name="Jones T."/>
            <person name="Kahn D."/>
            <person name="Kahn M.L."/>
            <person name="Kalman S."/>
            <person name="Keating D.H."/>
            <person name="Kiss E."/>
            <person name="Komp C."/>
            <person name="Lelaure V."/>
            <person name="Masuy D."/>
            <person name="Palm C."/>
            <person name="Peck M.C."/>
            <person name="Pohl T.M."/>
            <person name="Portetelle D."/>
            <person name="Purnelle B."/>
            <person name="Ramsperger U."/>
            <person name="Surzycki R."/>
            <person name="Thebault P."/>
            <person name="Vandenbol M."/>
            <person name="Vorhoelter F.J."/>
            <person name="Weidner S."/>
            <person name="Wells D.H."/>
            <person name="Wong K."/>
            <person name="Yeh K.-C."/>
            <person name="Batut J."/>
        </authorList>
    </citation>
    <scope>NUCLEOTIDE SEQUENCE [LARGE SCALE GENOMIC DNA]</scope>
    <source>
        <strain>1021</strain>
    </source>
</reference>
<feature type="chain" id="PRO_0000240105" description="NADH-quinone oxidoreductase subunit H 2">
    <location>
        <begin position="1"/>
        <end position="328"/>
    </location>
</feature>
<feature type="transmembrane region" description="Helical" evidence="1">
    <location>
        <begin position="3"/>
        <end position="23"/>
    </location>
</feature>
<feature type="transmembrane region" description="Helical" evidence="1">
    <location>
        <begin position="77"/>
        <end position="97"/>
    </location>
</feature>
<feature type="transmembrane region" description="Helical" evidence="1">
    <location>
        <begin position="119"/>
        <end position="139"/>
    </location>
</feature>
<feature type="transmembrane region" description="Helical" evidence="1">
    <location>
        <begin position="165"/>
        <end position="185"/>
    </location>
</feature>
<feature type="transmembrane region" description="Helical" evidence="1">
    <location>
        <begin position="191"/>
        <end position="211"/>
    </location>
</feature>
<feature type="transmembrane region" description="Helical" evidence="1">
    <location>
        <begin position="250"/>
        <end position="270"/>
    </location>
</feature>
<feature type="transmembrane region" description="Helical" evidence="1">
    <location>
        <begin position="272"/>
        <end position="292"/>
    </location>
</feature>
<feature type="transmembrane region" description="Helical" evidence="1">
    <location>
        <begin position="307"/>
        <end position="327"/>
    </location>
</feature>
<dbReference type="EC" id="7.1.1.-" evidence="1"/>
<dbReference type="EMBL" id="AJ245399">
    <property type="protein sequence ID" value="CAC14152.1"/>
    <property type="molecule type" value="Genomic_DNA"/>
</dbReference>
<dbReference type="EMBL" id="AE006469">
    <property type="protein sequence ID" value="AAK65483.1"/>
    <property type="molecule type" value="Genomic_DNA"/>
</dbReference>
<dbReference type="PIR" id="A95365">
    <property type="entry name" value="A95365"/>
</dbReference>
<dbReference type="RefSeq" id="NP_436071.1">
    <property type="nucleotide sequence ID" value="NC_003037.1"/>
</dbReference>
<dbReference type="SMR" id="Q9EV66"/>
<dbReference type="EnsemblBacteria" id="AAK65483">
    <property type="protein sequence ID" value="AAK65483"/>
    <property type="gene ID" value="SMa1516"/>
</dbReference>
<dbReference type="KEGG" id="sme:SMa1516"/>
<dbReference type="PATRIC" id="fig|266834.11.peg.856"/>
<dbReference type="HOGENOM" id="CLU_015134_0_1_5"/>
<dbReference type="OrthoDB" id="9803734at2"/>
<dbReference type="Proteomes" id="UP000001976">
    <property type="component" value="Plasmid pSymA"/>
</dbReference>
<dbReference type="GO" id="GO:0005886">
    <property type="term" value="C:plasma membrane"/>
    <property type="evidence" value="ECO:0007669"/>
    <property type="project" value="UniProtKB-SubCell"/>
</dbReference>
<dbReference type="GO" id="GO:0003954">
    <property type="term" value="F:NADH dehydrogenase activity"/>
    <property type="evidence" value="ECO:0007669"/>
    <property type="project" value="TreeGrafter"/>
</dbReference>
<dbReference type="GO" id="GO:0016655">
    <property type="term" value="F:oxidoreductase activity, acting on NAD(P)H, quinone or similar compound as acceptor"/>
    <property type="evidence" value="ECO:0007669"/>
    <property type="project" value="UniProtKB-UniRule"/>
</dbReference>
<dbReference type="GO" id="GO:0048038">
    <property type="term" value="F:quinone binding"/>
    <property type="evidence" value="ECO:0007669"/>
    <property type="project" value="UniProtKB-KW"/>
</dbReference>
<dbReference type="GO" id="GO:0009060">
    <property type="term" value="P:aerobic respiration"/>
    <property type="evidence" value="ECO:0007669"/>
    <property type="project" value="TreeGrafter"/>
</dbReference>
<dbReference type="HAMAP" id="MF_01350">
    <property type="entry name" value="NDH1_NuoH"/>
    <property type="match status" value="1"/>
</dbReference>
<dbReference type="InterPro" id="IPR001694">
    <property type="entry name" value="NADH_UbQ_OxRdtase_su1/FPO"/>
</dbReference>
<dbReference type="InterPro" id="IPR018086">
    <property type="entry name" value="NADH_UbQ_OxRdtase_su1_CS"/>
</dbReference>
<dbReference type="NCBIfam" id="NF004741">
    <property type="entry name" value="PRK06076.1-2"/>
    <property type="match status" value="1"/>
</dbReference>
<dbReference type="PANTHER" id="PTHR11432">
    <property type="entry name" value="NADH DEHYDROGENASE SUBUNIT 1"/>
    <property type="match status" value="1"/>
</dbReference>
<dbReference type="PANTHER" id="PTHR11432:SF3">
    <property type="entry name" value="NADH-UBIQUINONE OXIDOREDUCTASE CHAIN 1"/>
    <property type="match status" value="1"/>
</dbReference>
<dbReference type="Pfam" id="PF00146">
    <property type="entry name" value="NADHdh"/>
    <property type="match status" value="1"/>
</dbReference>
<dbReference type="PROSITE" id="PS00667">
    <property type="entry name" value="COMPLEX1_ND1_1"/>
    <property type="match status" value="1"/>
</dbReference>
<protein>
    <recommendedName>
        <fullName evidence="1">NADH-quinone oxidoreductase subunit H 2</fullName>
        <ecNumber evidence="1">7.1.1.-</ecNumber>
    </recommendedName>
    <alternativeName>
        <fullName evidence="1">NADH dehydrogenase I subunit H 2</fullName>
    </alternativeName>
    <alternativeName>
        <fullName evidence="1">NDH-1 subunit H 2</fullName>
    </alternativeName>
</protein>
<gene>
    <name evidence="1" type="primary">nuoH2</name>
    <name type="ordered locus">RA0825</name>
    <name type="ORF">SMa1516</name>
</gene>
<evidence type="ECO:0000255" key="1">
    <source>
        <dbReference type="HAMAP-Rule" id="MF_01350"/>
    </source>
</evidence>
<sequence length="328" mass="36387">MELIVALGVIVFKVALVIAILLLLPLPLTWLERKIAGHMQQRMGPMRVGWHGLLQPVADGIKLLTKEDHIPAEADRFLFKLAPILALAPPFVVFAAIPFGESVSVLGNEITLYISNLNVALLFVFAVIGLEVYGVIFGGWAANSKYAVLGSLRTCAQMISYEIPMGFAVIGVVMLAQSMSLLDIVRAQTDVWNVVYQPIGFFVFFVAGLAEAQRIPFDLAEAEGDLGAGFHTEYSGIRFALFMVSEYVVMVLVSVLTVILFFGGWNGVLIPLPPLLWFLLKVAFFVYLFMWFRFTFPRYRYDQLMAIGWKVLLPLSLANIIISGVVFS</sequence>